<reference key="1">
    <citation type="journal article" date="2011" name="J. Bacteriol.">
        <title>Complete genome sequence of the metabolically versatile plant growth-promoting endophyte, Variovorax paradoxus S110.</title>
        <authorList>
            <person name="Han J.I."/>
            <person name="Choi H.K."/>
            <person name="Lee S.W."/>
            <person name="Orwin P.M."/>
            <person name="Kim J."/>
            <person name="Laroe S.L."/>
            <person name="Kim T.G."/>
            <person name="O'Neil J."/>
            <person name="Leadbetter J.R."/>
            <person name="Lee S.Y."/>
            <person name="Hur C.G."/>
            <person name="Spain J.C."/>
            <person name="Ovchinnikova G."/>
            <person name="Goodwin L."/>
            <person name="Han C."/>
        </authorList>
    </citation>
    <scope>NUCLEOTIDE SEQUENCE [LARGE SCALE GENOMIC DNA]</scope>
    <source>
        <strain>S110</strain>
    </source>
</reference>
<gene>
    <name evidence="2" type="primary">rpsL</name>
    <name type="ordered locus">Vapar_4920</name>
</gene>
<feature type="chain" id="PRO_1000205930" description="Small ribosomal subunit protein uS12">
    <location>
        <begin position="1"/>
        <end position="125"/>
    </location>
</feature>
<feature type="region of interest" description="Disordered" evidence="3">
    <location>
        <begin position="106"/>
        <end position="125"/>
    </location>
</feature>
<feature type="compositionally biased region" description="Basic residues" evidence="3">
    <location>
        <begin position="113"/>
        <end position="125"/>
    </location>
</feature>
<feature type="modified residue" description="3-methylthioaspartic acid" evidence="1">
    <location>
        <position position="89"/>
    </location>
</feature>
<accession>C5CP60</accession>
<keyword id="KW-0488">Methylation</keyword>
<keyword id="KW-0687">Ribonucleoprotein</keyword>
<keyword id="KW-0689">Ribosomal protein</keyword>
<keyword id="KW-0694">RNA-binding</keyword>
<keyword id="KW-0699">rRNA-binding</keyword>
<keyword id="KW-0820">tRNA-binding</keyword>
<dbReference type="EMBL" id="CP001635">
    <property type="protein sequence ID" value="ACS21524.1"/>
    <property type="molecule type" value="Genomic_DNA"/>
</dbReference>
<dbReference type="SMR" id="C5CP60"/>
<dbReference type="STRING" id="543728.Vapar_4920"/>
<dbReference type="KEGG" id="vap:Vapar_4920"/>
<dbReference type="eggNOG" id="COG0048">
    <property type="taxonomic scope" value="Bacteria"/>
</dbReference>
<dbReference type="HOGENOM" id="CLU_104295_1_2_4"/>
<dbReference type="OrthoDB" id="9802366at2"/>
<dbReference type="GO" id="GO:0015935">
    <property type="term" value="C:small ribosomal subunit"/>
    <property type="evidence" value="ECO:0007669"/>
    <property type="project" value="InterPro"/>
</dbReference>
<dbReference type="GO" id="GO:0019843">
    <property type="term" value="F:rRNA binding"/>
    <property type="evidence" value="ECO:0007669"/>
    <property type="project" value="UniProtKB-UniRule"/>
</dbReference>
<dbReference type="GO" id="GO:0003735">
    <property type="term" value="F:structural constituent of ribosome"/>
    <property type="evidence" value="ECO:0007669"/>
    <property type="project" value="InterPro"/>
</dbReference>
<dbReference type="GO" id="GO:0000049">
    <property type="term" value="F:tRNA binding"/>
    <property type="evidence" value="ECO:0007669"/>
    <property type="project" value="UniProtKB-UniRule"/>
</dbReference>
<dbReference type="GO" id="GO:0006412">
    <property type="term" value="P:translation"/>
    <property type="evidence" value="ECO:0007669"/>
    <property type="project" value="UniProtKB-UniRule"/>
</dbReference>
<dbReference type="CDD" id="cd03368">
    <property type="entry name" value="Ribosomal_S12"/>
    <property type="match status" value="1"/>
</dbReference>
<dbReference type="FunFam" id="2.40.50.140:FF:000001">
    <property type="entry name" value="30S ribosomal protein S12"/>
    <property type="match status" value="1"/>
</dbReference>
<dbReference type="Gene3D" id="2.40.50.140">
    <property type="entry name" value="Nucleic acid-binding proteins"/>
    <property type="match status" value="1"/>
</dbReference>
<dbReference type="HAMAP" id="MF_00403_B">
    <property type="entry name" value="Ribosomal_uS12_B"/>
    <property type="match status" value="1"/>
</dbReference>
<dbReference type="InterPro" id="IPR012340">
    <property type="entry name" value="NA-bd_OB-fold"/>
</dbReference>
<dbReference type="InterPro" id="IPR006032">
    <property type="entry name" value="Ribosomal_uS12"/>
</dbReference>
<dbReference type="InterPro" id="IPR005679">
    <property type="entry name" value="Ribosomal_uS12_bac"/>
</dbReference>
<dbReference type="NCBIfam" id="TIGR00981">
    <property type="entry name" value="rpsL_bact"/>
    <property type="match status" value="1"/>
</dbReference>
<dbReference type="PANTHER" id="PTHR11652">
    <property type="entry name" value="30S RIBOSOMAL PROTEIN S12 FAMILY MEMBER"/>
    <property type="match status" value="1"/>
</dbReference>
<dbReference type="Pfam" id="PF00164">
    <property type="entry name" value="Ribosom_S12_S23"/>
    <property type="match status" value="1"/>
</dbReference>
<dbReference type="PIRSF" id="PIRSF002133">
    <property type="entry name" value="Ribosomal_S12/S23"/>
    <property type="match status" value="1"/>
</dbReference>
<dbReference type="PRINTS" id="PR01034">
    <property type="entry name" value="RIBOSOMALS12"/>
</dbReference>
<dbReference type="SUPFAM" id="SSF50249">
    <property type="entry name" value="Nucleic acid-binding proteins"/>
    <property type="match status" value="1"/>
</dbReference>
<dbReference type="PROSITE" id="PS00055">
    <property type="entry name" value="RIBOSOMAL_S12"/>
    <property type="match status" value="1"/>
</dbReference>
<protein>
    <recommendedName>
        <fullName evidence="2">Small ribosomal subunit protein uS12</fullName>
    </recommendedName>
    <alternativeName>
        <fullName evidence="4">30S ribosomal protein S12</fullName>
    </alternativeName>
</protein>
<name>RS12_VARPS</name>
<proteinExistence type="inferred from homology"/>
<evidence type="ECO:0000250" key="1"/>
<evidence type="ECO:0000255" key="2">
    <source>
        <dbReference type="HAMAP-Rule" id="MF_00403"/>
    </source>
</evidence>
<evidence type="ECO:0000256" key="3">
    <source>
        <dbReference type="SAM" id="MobiDB-lite"/>
    </source>
</evidence>
<evidence type="ECO:0000305" key="4"/>
<organism>
    <name type="scientific">Variovorax paradoxus (strain S110)</name>
    <dbReference type="NCBI Taxonomy" id="543728"/>
    <lineage>
        <taxon>Bacteria</taxon>
        <taxon>Pseudomonadati</taxon>
        <taxon>Pseudomonadota</taxon>
        <taxon>Betaproteobacteria</taxon>
        <taxon>Burkholderiales</taxon>
        <taxon>Comamonadaceae</taxon>
        <taxon>Variovorax</taxon>
    </lineage>
</organism>
<comment type="function">
    <text evidence="2">With S4 and S5 plays an important role in translational accuracy.</text>
</comment>
<comment type="function">
    <text evidence="2">Interacts with and stabilizes bases of the 16S rRNA that are involved in tRNA selection in the A site and with the mRNA backbone. Located at the interface of the 30S and 50S subunits, it traverses the body of the 30S subunit contacting proteins on the other side and probably holding the rRNA structure together. The combined cluster of proteins S8, S12 and S17 appears to hold together the shoulder and platform of the 30S subunit.</text>
</comment>
<comment type="subunit">
    <text evidence="2">Part of the 30S ribosomal subunit. Contacts proteins S8 and S17. May interact with IF1 in the 30S initiation complex.</text>
</comment>
<comment type="similarity">
    <text evidence="2">Belongs to the universal ribosomal protein uS12 family.</text>
</comment>
<sequence length="125" mass="13961">MPTINQLVRQGRTVEKINSKSPAMQNSPQRRGVCTRVYTTTPKKPNSALRKVAKVRLTNGFEVISYIGGEGHNLQEHSVVLVRGGRVKDLPGVRYHIVRGSLDLQGVKDRKQSRSKYGAKRPKKA</sequence>